<feature type="chain" id="PRO_0000121627" description="tRNA-specific 2-thiouridylase MnmA">
    <location>
        <begin position="1"/>
        <end position="359"/>
    </location>
</feature>
<feature type="region of interest" description="Interaction with tRNA" evidence="1">
    <location>
        <begin position="150"/>
        <end position="152"/>
    </location>
</feature>
<feature type="region of interest" description="Interaction with tRNA" evidence="1">
    <location>
        <begin position="306"/>
        <end position="307"/>
    </location>
</feature>
<feature type="active site" description="Nucleophile" evidence="1">
    <location>
        <position position="104"/>
    </location>
</feature>
<feature type="active site" description="Cysteine persulfide intermediate" evidence="1">
    <location>
        <position position="200"/>
    </location>
</feature>
<feature type="binding site" evidence="1">
    <location>
        <begin position="9"/>
        <end position="16"/>
    </location>
    <ligand>
        <name>ATP</name>
        <dbReference type="ChEBI" id="CHEBI:30616"/>
    </ligand>
</feature>
<feature type="binding site" evidence="1">
    <location>
        <position position="35"/>
    </location>
    <ligand>
        <name>ATP</name>
        <dbReference type="ChEBI" id="CHEBI:30616"/>
    </ligand>
</feature>
<feature type="binding site" evidence="1">
    <location>
        <position position="128"/>
    </location>
    <ligand>
        <name>ATP</name>
        <dbReference type="ChEBI" id="CHEBI:30616"/>
    </ligand>
</feature>
<feature type="site" description="Interaction with tRNA" evidence="1">
    <location>
        <position position="129"/>
    </location>
</feature>
<feature type="site" description="Interaction with tRNA" evidence="1">
    <location>
        <position position="339"/>
    </location>
</feature>
<feature type="disulfide bond" description="Alternate" evidence="1">
    <location>
        <begin position="104"/>
        <end position="200"/>
    </location>
</feature>
<comment type="function">
    <text evidence="1">Catalyzes the 2-thiolation of uridine at the wobble position (U34) of tRNA, leading to the formation of s(2)U34.</text>
</comment>
<comment type="catalytic activity">
    <reaction evidence="1">
        <text>S-sulfanyl-L-cysteinyl-[protein] + uridine(34) in tRNA + AH2 + ATP = 2-thiouridine(34) in tRNA + L-cysteinyl-[protein] + A + AMP + diphosphate + H(+)</text>
        <dbReference type="Rhea" id="RHEA:47032"/>
        <dbReference type="Rhea" id="RHEA-COMP:10131"/>
        <dbReference type="Rhea" id="RHEA-COMP:11726"/>
        <dbReference type="Rhea" id="RHEA-COMP:11727"/>
        <dbReference type="Rhea" id="RHEA-COMP:11728"/>
        <dbReference type="ChEBI" id="CHEBI:13193"/>
        <dbReference type="ChEBI" id="CHEBI:15378"/>
        <dbReference type="ChEBI" id="CHEBI:17499"/>
        <dbReference type="ChEBI" id="CHEBI:29950"/>
        <dbReference type="ChEBI" id="CHEBI:30616"/>
        <dbReference type="ChEBI" id="CHEBI:33019"/>
        <dbReference type="ChEBI" id="CHEBI:61963"/>
        <dbReference type="ChEBI" id="CHEBI:65315"/>
        <dbReference type="ChEBI" id="CHEBI:87170"/>
        <dbReference type="ChEBI" id="CHEBI:456215"/>
        <dbReference type="EC" id="2.8.1.13"/>
    </reaction>
</comment>
<comment type="subcellular location">
    <subcellularLocation>
        <location evidence="1">Cytoplasm</location>
    </subcellularLocation>
</comment>
<comment type="similarity">
    <text evidence="1">Belongs to the MnmA/TRMU family.</text>
</comment>
<comment type="sequence caution" evidence="2">
    <conflict type="erroneous initiation">
        <sequence resource="EMBL-CDS" id="BAB81489"/>
    </conflict>
</comment>
<evidence type="ECO:0000255" key="1">
    <source>
        <dbReference type="HAMAP-Rule" id="MF_00144"/>
    </source>
</evidence>
<evidence type="ECO:0000305" key="2"/>
<name>MNMA_CLOPE</name>
<gene>
    <name evidence="1" type="primary">mnmA</name>
    <name type="synonym">trmU</name>
    <name type="ordered locus">CPE1783</name>
</gene>
<dbReference type="EC" id="2.8.1.13" evidence="1"/>
<dbReference type="EMBL" id="BA000016">
    <property type="protein sequence ID" value="BAB81489.1"/>
    <property type="status" value="ALT_INIT"/>
    <property type="molecule type" value="Genomic_DNA"/>
</dbReference>
<dbReference type="SMR" id="Q8XJH3"/>
<dbReference type="STRING" id="195102.gene:10491047"/>
<dbReference type="KEGG" id="cpe:CPE1783"/>
<dbReference type="HOGENOM" id="CLU_035188_0_0_9"/>
<dbReference type="Proteomes" id="UP000000818">
    <property type="component" value="Chromosome"/>
</dbReference>
<dbReference type="GO" id="GO:0005737">
    <property type="term" value="C:cytoplasm"/>
    <property type="evidence" value="ECO:0007669"/>
    <property type="project" value="UniProtKB-SubCell"/>
</dbReference>
<dbReference type="GO" id="GO:0005524">
    <property type="term" value="F:ATP binding"/>
    <property type="evidence" value="ECO:0007669"/>
    <property type="project" value="UniProtKB-KW"/>
</dbReference>
<dbReference type="GO" id="GO:0000049">
    <property type="term" value="F:tRNA binding"/>
    <property type="evidence" value="ECO:0007669"/>
    <property type="project" value="UniProtKB-KW"/>
</dbReference>
<dbReference type="GO" id="GO:0103016">
    <property type="term" value="F:tRNA-uridine 2-sulfurtransferase activity"/>
    <property type="evidence" value="ECO:0007669"/>
    <property type="project" value="UniProtKB-EC"/>
</dbReference>
<dbReference type="GO" id="GO:0002143">
    <property type="term" value="P:tRNA wobble position uridine thiolation"/>
    <property type="evidence" value="ECO:0007669"/>
    <property type="project" value="TreeGrafter"/>
</dbReference>
<dbReference type="CDD" id="cd01998">
    <property type="entry name" value="MnmA_TRMU-like"/>
    <property type="match status" value="1"/>
</dbReference>
<dbReference type="FunFam" id="2.30.30.280:FF:000001">
    <property type="entry name" value="tRNA-specific 2-thiouridylase MnmA"/>
    <property type="match status" value="1"/>
</dbReference>
<dbReference type="FunFam" id="2.40.30.10:FF:000023">
    <property type="entry name" value="tRNA-specific 2-thiouridylase MnmA"/>
    <property type="match status" value="1"/>
</dbReference>
<dbReference type="FunFam" id="3.40.50.620:FF:000115">
    <property type="entry name" value="tRNA-specific 2-thiouridylase MnmA"/>
    <property type="match status" value="1"/>
</dbReference>
<dbReference type="Gene3D" id="2.30.30.280">
    <property type="entry name" value="Adenine nucleotide alpha hydrolases-like domains"/>
    <property type="match status" value="1"/>
</dbReference>
<dbReference type="Gene3D" id="3.40.50.620">
    <property type="entry name" value="HUPs"/>
    <property type="match status" value="1"/>
</dbReference>
<dbReference type="Gene3D" id="2.40.30.10">
    <property type="entry name" value="Translation factors"/>
    <property type="match status" value="1"/>
</dbReference>
<dbReference type="HAMAP" id="MF_00144">
    <property type="entry name" value="tRNA_thiouridyl_MnmA"/>
    <property type="match status" value="1"/>
</dbReference>
<dbReference type="InterPro" id="IPR004506">
    <property type="entry name" value="MnmA-like"/>
</dbReference>
<dbReference type="InterPro" id="IPR046885">
    <property type="entry name" value="MnmA-like_C"/>
</dbReference>
<dbReference type="InterPro" id="IPR046884">
    <property type="entry name" value="MnmA-like_central"/>
</dbReference>
<dbReference type="InterPro" id="IPR023382">
    <property type="entry name" value="MnmA-like_central_sf"/>
</dbReference>
<dbReference type="InterPro" id="IPR014729">
    <property type="entry name" value="Rossmann-like_a/b/a_fold"/>
</dbReference>
<dbReference type="NCBIfam" id="NF001138">
    <property type="entry name" value="PRK00143.1"/>
    <property type="match status" value="1"/>
</dbReference>
<dbReference type="NCBIfam" id="TIGR00420">
    <property type="entry name" value="trmU"/>
    <property type="match status" value="1"/>
</dbReference>
<dbReference type="PANTHER" id="PTHR11933:SF5">
    <property type="entry name" value="MITOCHONDRIAL TRNA-SPECIFIC 2-THIOURIDYLASE 1"/>
    <property type="match status" value="1"/>
</dbReference>
<dbReference type="PANTHER" id="PTHR11933">
    <property type="entry name" value="TRNA 5-METHYLAMINOMETHYL-2-THIOURIDYLATE -METHYLTRANSFERASE"/>
    <property type="match status" value="1"/>
</dbReference>
<dbReference type="Pfam" id="PF03054">
    <property type="entry name" value="tRNA_Me_trans"/>
    <property type="match status" value="1"/>
</dbReference>
<dbReference type="Pfam" id="PF20258">
    <property type="entry name" value="tRNA_Me_trans_C"/>
    <property type="match status" value="1"/>
</dbReference>
<dbReference type="Pfam" id="PF20259">
    <property type="entry name" value="tRNA_Me_trans_M"/>
    <property type="match status" value="1"/>
</dbReference>
<dbReference type="SUPFAM" id="SSF52402">
    <property type="entry name" value="Adenine nucleotide alpha hydrolases-like"/>
    <property type="match status" value="1"/>
</dbReference>
<proteinExistence type="inferred from homology"/>
<organism>
    <name type="scientific">Clostridium perfringens (strain 13 / Type A)</name>
    <dbReference type="NCBI Taxonomy" id="195102"/>
    <lineage>
        <taxon>Bacteria</taxon>
        <taxon>Bacillati</taxon>
        <taxon>Bacillota</taxon>
        <taxon>Clostridia</taxon>
        <taxon>Eubacteriales</taxon>
        <taxon>Clostridiaceae</taxon>
        <taxon>Clostridium</taxon>
    </lineage>
</organism>
<reference key="1">
    <citation type="journal article" date="2002" name="Proc. Natl. Acad. Sci. U.S.A.">
        <title>Complete genome sequence of Clostridium perfringens, an anaerobic flesh-eater.</title>
        <authorList>
            <person name="Shimizu T."/>
            <person name="Ohtani K."/>
            <person name="Hirakawa H."/>
            <person name="Ohshima K."/>
            <person name="Yamashita A."/>
            <person name="Shiba T."/>
            <person name="Ogasawara N."/>
            <person name="Hattori M."/>
            <person name="Kuhara S."/>
            <person name="Hayashi H."/>
        </authorList>
    </citation>
    <scope>NUCLEOTIDE SEQUENCE [LARGE SCALE GENOMIC DNA]</scope>
    <source>
        <strain>13 / Type A</strain>
    </source>
</reference>
<keyword id="KW-0067">ATP-binding</keyword>
<keyword id="KW-0963">Cytoplasm</keyword>
<keyword id="KW-1015">Disulfide bond</keyword>
<keyword id="KW-0547">Nucleotide-binding</keyword>
<keyword id="KW-1185">Reference proteome</keyword>
<keyword id="KW-0694">RNA-binding</keyword>
<keyword id="KW-0808">Transferase</keyword>
<keyword id="KW-0819">tRNA processing</keyword>
<keyword id="KW-0820">tRNA-binding</keyword>
<sequence length="359" mass="40466">MTKKKVVIGMSGGVDSSVAAYLLKEQGYDVIGVTMQIWQEDKEYEEREGGCCSLSAVDDARRVAQKLDIPFYVLNFRDSFKRNVIDYFVDEYIQGRTPNPCIACNKYLKFDELLQKAKGIGADYVATGHYAKIEERDGRFQLIRSKDDRKDQTYALYNLTQEQLEHTLMPCGEFTKDKIREIAKEIGLDVHNKKDSEEICFIPDNNHGRYICEAAPNKVRPGNFVDKYGNVLGKHKGIVYYTIGQRKGLGLALGRPVFVTDINPVTNTVVVGPEEDIFKTDLVCKDINFISIDKLEGPMEVEAKIRYSARPAKATISPMENGRVKVSFEDKQRAITKGQSVVFYKDDLVVGGGIIESLL</sequence>
<protein>
    <recommendedName>
        <fullName evidence="1">tRNA-specific 2-thiouridylase MnmA</fullName>
        <ecNumber evidence="1">2.8.1.13</ecNumber>
    </recommendedName>
</protein>
<accession>Q8XJH3</accession>